<name>11S3_HELAN</name>
<accession>P19084</accession>
<comment type="function">
    <text>This is a seed storage protein.</text>
</comment>
<comment type="subunit">
    <text>Hexamer; each subunit is composed of an acidic and a basic chain derived from a single precursor and linked by a disulfide bond.</text>
</comment>
<comment type="similarity">
    <text evidence="4">Belongs to the 11S seed storage protein (globulins) family.</text>
</comment>
<proteinExistence type="inferred from homology"/>
<evidence type="ECO:0000250" key="1"/>
<evidence type="ECO:0000255" key="2"/>
<evidence type="ECO:0000256" key="3">
    <source>
        <dbReference type="SAM" id="MobiDB-lite"/>
    </source>
</evidence>
<evidence type="ECO:0000305" key="4"/>
<keyword id="KW-1015">Disulfide bond</keyword>
<keyword id="KW-0708">Seed storage protein</keyword>
<keyword id="KW-0732">Signal</keyword>
<keyword id="KW-0758">Storage protein</keyword>
<sequence>MASKATLLLAFTLLFATCIARHQQRQQQQNQCQLQNIEALEPIEVIQAEAGVTEIWDAYDQQFQCAWSILFDTGFNLVAFSCLPTSTPLFWPSSREGVILPGCRRTYEYSQEQQFSGEGGRRGGGEGTFRTVIRKLENLKEGDVVAIPTGTAHWLHNDGNTELVVVFLDTQNHENQLDENQRRFFLAGNPQAQAQSQQQQQRQPRQQSPQRQRQRQRQGQGQNAGNIFNGFTPELIAQSFNVDQETAQKLQGQNDQRGHIVNVGQDLQIVRPPQDRRSPRQQQEQATSPRQQQEQQQGRRGGWSNGVEETICSMKFKVNIDNPSQADFVNPQAGSIANLNSFKFPILEHLRLSVERGELRPNAIQSPHWTINAHNLLYVTEGALRVQIVDNQGNSVFDNELREGQVVVIPQNFAVIKRANEQGSRWVSFKTNDNAMIANLAGRVSASAASPLTLWANRYQLSREEAQQLKFSQRETVLFAPSFSRGQGIRASR</sequence>
<organism>
    <name type="scientific">Helianthus annuus</name>
    <name type="common">Common sunflower</name>
    <dbReference type="NCBI Taxonomy" id="4232"/>
    <lineage>
        <taxon>Eukaryota</taxon>
        <taxon>Viridiplantae</taxon>
        <taxon>Streptophyta</taxon>
        <taxon>Embryophyta</taxon>
        <taxon>Tracheophyta</taxon>
        <taxon>Spermatophyta</taxon>
        <taxon>Magnoliopsida</taxon>
        <taxon>eudicotyledons</taxon>
        <taxon>Gunneridae</taxon>
        <taxon>Pentapetalae</taxon>
        <taxon>asterids</taxon>
        <taxon>campanulids</taxon>
        <taxon>Asterales</taxon>
        <taxon>Asteraceae</taxon>
        <taxon>Asteroideae</taxon>
        <taxon>Heliantheae alliance</taxon>
        <taxon>Heliantheae</taxon>
        <taxon>Helianthus</taxon>
    </lineage>
</organism>
<feature type="signal peptide">
    <location>
        <begin position="1"/>
        <end position="20"/>
    </location>
</feature>
<feature type="chain" id="PRO_0000032025" description="11S globulin seed storage protein G3 acidic chain">
    <location>
        <begin position="21"/>
        <end position="305"/>
    </location>
</feature>
<feature type="chain" id="PRO_0000032026" description="11S globulin seed storage protein G3 basic chain">
    <location>
        <begin position="306"/>
        <end position="493"/>
    </location>
</feature>
<feature type="domain" description="Cupin type-1 1" evidence="2">
    <location>
        <begin position="37"/>
        <end position="248"/>
    </location>
</feature>
<feature type="domain" description="Cupin type-1 2" evidence="2">
    <location>
        <begin position="318"/>
        <end position="467"/>
    </location>
</feature>
<feature type="region of interest" description="Disordered" evidence="3">
    <location>
        <begin position="190"/>
        <end position="229"/>
    </location>
</feature>
<feature type="region of interest" description="Disordered" evidence="3">
    <location>
        <begin position="269"/>
        <end position="305"/>
    </location>
</feature>
<feature type="compositionally biased region" description="Low complexity" evidence="3">
    <location>
        <begin position="191"/>
        <end position="221"/>
    </location>
</feature>
<feature type="compositionally biased region" description="Low complexity" evidence="3">
    <location>
        <begin position="280"/>
        <end position="298"/>
    </location>
</feature>
<feature type="disulfide bond" evidence="1">
    <location>
        <begin position="32"/>
        <end position="65"/>
    </location>
</feature>
<feature type="disulfide bond" description="Interchain (between acidic and basic chains)" evidence="2">
    <location>
        <begin position="103"/>
        <end position="312"/>
    </location>
</feature>
<reference key="1">
    <citation type="journal article" date="1988" name="Gene">
        <title>Organization of the sunflower 11S storage protein gene family.</title>
        <authorList>
            <person name="Vonder Haar R.A."/>
            <person name="Allen R.D."/>
            <person name="Cohen E.A."/>
            <person name="Nessler C.L."/>
            <person name="Thomas T.L."/>
        </authorList>
    </citation>
    <scope>NUCLEOTIDE SEQUENCE [GENOMIC DNA]</scope>
</reference>
<protein>
    <recommendedName>
        <fullName>11S globulin seed storage protein G3</fullName>
    </recommendedName>
    <alternativeName>
        <fullName>Helianthinin-G3</fullName>
    </alternativeName>
    <component>
        <recommendedName>
            <fullName>11S globulin seed storage protein G3 acidic chain</fullName>
        </recommendedName>
    </component>
    <component>
        <recommendedName>
            <fullName>11S globulin seed storage protein G3 basic chain</fullName>
        </recommendedName>
    </component>
</protein>
<dbReference type="EMBL" id="M28832">
    <property type="protein sequence ID" value="AAA33374.1"/>
    <property type="molecule type" value="Genomic_DNA"/>
</dbReference>
<dbReference type="PIR" id="JA0089">
    <property type="entry name" value="JA0089"/>
</dbReference>
<dbReference type="SMR" id="P19084"/>
<dbReference type="GO" id="GO:0045735">
    <property type="term" value="F:nutrient reservoir activity"/>
    <property type="evidence" value="ECO:0007669"/>
    <property type="project" value="UniProtKB-KW"/>
</dbReference>
<dbReference type="CDD" id="cd02243">
    <property type="entry name" value="cupin_11S_legumin_C"/>
    <property type="match status" value="1"/>
</dbReference>
<dbReference type="CDD" id="cd02242">
    <property type="entry name" value="cupin_11S_legumin_N"/>
    <property type="match status" value="1"/>
</dbReference>
<dbReference type="FunFam" id="2.60.120.10:FF:000073">
    <property type="entry name" value="Glycinin G1"/>
    <property type="match status" value="1"/>
</dbReference>
<dbReference type="Gene3D" id="2.60.120.10">
    <property type="entry name" value="Jelly Rolls"/>
    <property type="match status" value="2"/>
</dbReference>
<dbReference type="InterPro" id="IPR022379">
    <property type="entry name" value="11S_seedstore_CS"/>
</dbReference>
<dbReference type="InterPro" id="IPR006044">
    <property type="entry name" value="11S_seedstore_pln"/>
</dbReference>
<dbReference type="InterPro" id="IPR006045">
    <property type="entry name" value="Cupin_1"/>
</dbReference>
<dbReference type="InterPro" id="IPR014710">
    <property type="entry name" value="RmlC-like_jellyroll"/>
</dbReference>
<dbReference type="InterPro" id="IPR011051">
    <property type="entry name" value="RmlC_Cupin_sf"/>
</dbReference>
<dbReference type="InterPro" id="IPR050253">
    <property type="entry name" value="Seed_Storage-Functional"/>
</dbReference>
<dbReference type="PANTHER" id="PTHR31189:SF56">
    <property type="entry name" value="11-S SEED STORAGE PROTEIN, PLANT, RMLC-LIKE CUPIN DOMAIN, RMLC-LIKE JELLY ROLL FOLD PROTEIN-RELATED"/>
    <property type="match status" value="1"/>
</dbReference>
<dbReference type="PANTHER" id="PTHR31189">
    <property type="entry name" value="OS03G0336100 PROTEIN-RELATED"/>
    <property type="match status" value="1"/>
</dbReference>
<dbReference type="Pfam" id="PF00190">
    <property type="entry name" value="Cupin_1"/>
    <property type="match status" value="2"/>
</dbReference>
<dbReference type="PRINTS" id="PR00439">
    <property type="entry name" value="11SGLOBULIN"/>
</dbReference>
<dbReference type="SMART" id="SM00835">
    <property type="entry name" value="Cupin_1"/>
    <property type="match status" value="2"/>
</dbReference>
<dbReference type="SUPFAM" id="SSF51182">
    <property type="entry name" value="RmlC-like cupins"/>
    <property type="match status" value="1"/>
</dbReference>
<dbReference type="PROSITE" id="PS00305">
    <property type="entry name" value="11S_SEED_STORAGE"/>
    <property type="match status" value="1"/>
</dbReference>
<gene>
    <name type="primary">HAG3</name>
</gene>